<dbReference type="EC" id="3.6.1.-" evidence="1"/>
<dbReference type="EMBL" id="AE013598">
    <property type="protein sequence ID" value="AAW74349.1"/>
    <property type="molecule type" value="Genomic_DNA"/>
</dbReference>
<dbReference type="SMR" id="Q5H3X2"/>
<dbReference type="STRING" id="291331.XOO1095"/>
<dbReference type="KEGG" id="xoo:XOO1095"/>
<dbReference type="PATRIC" id="fig|291331.8.peg.1218"/>
<dbReference type="HOGENOM" id="CLU_033617_0_1_6"/>
<dbReference type="Proteomes" id="UP000006735">
    <property type="component" value="Chromosome"/>
</dbReference>
<dbReference type="GO" id="GO:0005737">
    <property type="term" value="C:cytoplasm"/>
    <property type="evidence" value="ECO:0007669"/>
    <property type="project" value="UniProtKB-SubCell"/>
</dbReference>
<dbReference type="GO" id="GO:0005525">
    <property type="term" value="F:GTP binding"/>
    <property type="evidence" value="ECO:0007669"/>
    <property type="project" value="UniProtKB-UniRule"/>
</dbReference>
<dbReference type="GO" id="GO:0003924">
    <property type="term" value="F:GTPase activity"/>
    <property type="evidence" value="ECO:0007669"/>
    <property type="project" value="UniProtKB-UniRule"/>
</dbReference>
<dbReference type="GO" id="GO:0046872">
    <property type="term" value="F:metal ion binding"/>
    <property type="evidence" value="ECO:0007669"/>
    <property type="project" value="UniProtKB-KW"/>
</dbReference>
<dbReference type="GO" id="GO:0019843">
    <property type="term" value="F:rRNA binding"/>
    <property type="evidence" value="ECO:0007669"/>
    <property type="project" value="UniProtKB-KW"/>
</dbReference>
<dbReference type="GO" id="GO:0042274">
    <property type="term" value="P:ribosomal small subunit biogenesis"/>
    <property type="evidence" value="ECO:0007669"/>
    <property type="project" value="UniProtKB-UniRule"/>
</dbReference>
<dbReference type="CDD" id="cd01854">
    <property type="entry name" value="YjeQ_EngC"/>
    <property type="match status" value="1"/>
</dbReference>
<dbReference type="Gene3D" id="3.40.50.300">
    <property type="entry name" value="P-loop containing nucleotide triphosphate hydrolases"/>
    <property type="match status" value="1"/>
</dbReference>
<dbReference type="Gene3D" id="1.10.40.50">
    <property type="entry name" value="Probable gtpase engc, domain 3"/>
    <property type="match status" value="1"/>
</dbReference>
<dbReference type="HAMAP" id="MF_01820">
    <property type="entry name" value="GTPase_RsgA"/>
    <property type="match status" value="1"/>
</dbReference>
<dbReference type="InterPro" id="IPR030378">
    <property type="entry name" value="G_CP_dom"/>
</dbReference>
<dbReference type="InterPro" id="IPR027417">
    <property type="entry name" value="P-loop_NTPase"/>
</dbReference>
<dbReference type="InterPro" id="IPR004881">
    <property type="entry name" value="Ribosome_biogen_GTPase_RsgA"/>
</dbReference>
<dbReference type="InterPro" id="IPR010914">
    <property type="entry name" value="RsgA_GTPase_dom"/>
</dbReference>
<dbReference type="NCBIfam" id="TIGR00157">
    <property type="entry name" value="ribosome small subunit-dependent GTPase A"/>
    <property type="match status" value="1"/>
</dbReference>
<dbReference type="PANTHER" id="PTHR32120">
    <property type="entry name" value="SMALL RIBOSOMAL SUBUNIT BIOGENESIS GTPASE RSGA"/>
    <property type="match status" value="1"/>
</dbReference>
<dbReference type="PANTHER" id="PTHR32120:SF10">
    <property type="entry name" value="SMALL RIBOSOMAL SUBUNIT BIOGENESIS GTPASE RSGA"/>
    <property type="match status" value="1"/>
</dbReference>
<dbReference type="Pfam" id="PF03193">
    <property type="entry name" value="RsgA_GTPase"/>
    <property type="match status" value="1"/>
</dbReference>
<dbReference type="SUPFAM" id="SSF52540">
    <property type="entry name" value="P-loop containing nucleoside triphosphate hydrolases"/>
    <property type="match status" value="1"/>
</dbReference>
<dbReference type="PROSITE" id="PS50936">
    <property type="entry name" value="ENGC_GTPASE"/>
    <property type="match status" value="1"/>
</dbReference>
<dbReference type="PROSITE" id="PS51721">
    <property type="entry name" value="G_CP"/>
    <property type="match status" value="1"/>
</dbReference>
<sequence length="363" mass="39073">MSDISPDYPTLQSIGWPWPGPPEEAAWKAVFAAHPQALPARVVEQHRTGYVVADTPEASLKAESLPEWQRPRFPSHERAAVGDWVLMEGKRIVALLPRRTSIKRGAAGAHYHQQVIAANIDTVFIVCGLDADFNPRRIERYLLLVGGGGAQPVVVLTKADQTEHAEDALAVLEELEAQNIPLRAVNAKDPASVAALRPWLGDGRTAVLVGSSGAGKSTLTNTLLGTEKMKTNGVRENDSRGRHTTTHRALIPLPSGACLIDTPGMRELKPTGEEDLAEGGFSDVEALAAQCRFNDCAHIAEPGCAVRAAIEADLLDPERVANYMKLRVEVASAAEKLATRVAQNNRGKGSGKRPASIDRPGRR</sequence>
<accession>Q5H3X2</accession>
<feature type="chain" id="PRO_1000188155" description="Small ribosomal subunit biogenesis GTPase RsgA">
    <location>
        <begin position="1"/>
        <end position="363"/>
    </location>
</feature>
<feature type="domain" description="CP-type G" evidence="2">
    <location>
        <begin position="112"/>
        <end position="268"/>
    </location>
</feature>
<feature type="region of interest" description="Disordered" evidence="3">
    <location>
        <begin position="340"/>
        <end position="363"/>
    </location>
</feature>
<feature type="binding site" evidence="1">
    <location>
        <begin position="157"/>
        <end position="160"/>
    </location>
    <ligand>
        <name>GTP</name>
        <dbReference type="ChEBI" id="CHEBI:37565"/>
    </ligand>
</feature>
<feature type="binding site" evidence="1">
    <location>
        <begin position="210"/>
        <end position="218"/>
    </location>
    <ligand>
        <name>GTP</name>
        <dbReference type="ChEBI" id="CHEBI:37565"/>
    </ligand>
</feature>
<feature type="binding site" evidence="1">
    <location>
        <position position="291"/>
    </location>
    <ligand>
        <name>Zn(2+)</name>
        <dbReference type="ChEBI" id="CHEBI:29105"/>
    </ligand>
</feature>
<feature type="binding site" evidence="1">
    <location>
        <position position="296"/>
    </location>
    <ligand>
        <name>Zn(2+)</name>
        <dbReference type="ChEBI" id="CHEBI:29105"/>
    </ligand>
</feature>
<feature type="binding site" evidence="1">
    <location>
        <position position="298"/>
    </location>
    <ligand>
        <name>Zn(2+)</name>
        <dbReference type="ChEBI" id="CHEBI:29105"/>
    </ligand>
</feature>
<feature type="binding site" evidence="1">
    <location>
        <position position="304"/>
    </location>
    <ligand>
        <name>Zn(2+)</name>
        <dbReference type="ChEBI" id="CHEBI:29105"/>
    </ligand>
</feature>
<gene>
    <name evidence="1" type="primary">rsgA</name>
    <name type="ordered locus">XOO1095</name>
</gene>
<comment type="function">
    <text evidence="1">One of several proteins that assist in the late maturation steps of the functional core of the 30S ribosomal subunit. Helps release RbfA from mature subunits. May play a role in the assembly of ribosomal proteins into the subunit. Circularly permuted GTPase that catalyzes slow GTP hydrolysis, GTPase activity is stimulated by the 30S ribosomal subunit.</text>
</comment>
<comment type="cofactor">
    <cofactor evidence="1">
        <name>Zn(2+)</name>
        <dbReference type="ChEBI" id="CHEBI:29105"/>
    </cofactor>
    <text evidence="1">Binds 1 zinc ion per subunit.</text>
</comment>
<comment type="subunit">
    <text evidence="1">Monomer. Associates with 30S ribosomal subunit, binds 16S rRNA.</text>
</comment>
<comment type="subcellular location">
    <subcellularLocation>
        <location evidence="1">Cytoplasm</location>
    </subcellularLocation>
</comment>
<comment type="similarity">
    <text evidence="1">Belongs to the TRAFAC class YlqF/YawG GTPase family. RsgA subfamily.</text>
</comment>
<name>RSGA_XANOR</name>
<organism>
    <name type="scientific">Xanthomonas oryzae pv. oryzae (strain KACC10331 / KXO85)</name>
    <dbReference type="NCBI Taxonomy" id="291331"/>
    <lineage>
        <taxon>Bacteria</taxon>
        <taxon>Pseudomonadati</taxon>
        <taxon>Pseudomonadota</taxon>
        <taxon>Gammaproteobacteria</taxon>
        <taxon>Lysobacterales</taxon>
        <taxon>Lysobacteraceae</taxon>
        <taxon>Xanthomonas</taxon>
    </lineage>
</organism>
<reference key="1">
    <citation type="journal article" date="2005" name="Nucleic Acids Res.">
        <title>The genome sequence of Xanthomonas oryzae pathovar oryzae KACC10331, the bacterial blight pathogen of rice.</title>
        <authorList>
            <person name="Lee B.-M."/>
            <person name="Park Y.-J."/>
            <person name="Park D.-S."/>
            <person name="Kang H.-W."/>
            <person name="Kim J.-G."/>
            <person name="Song E.-S."/>
            <person name="Park I.-C."/>
            <person name="Yoon U.-H."/>
            <person name="Hahn J.-H."/>
            <person name="Koo B.-S."/>
            <person name="Lee G.-B."/>
            <person name="Kim H."/>
            <person name="Park H.-S."/>
            <person name="Yoon K.-O."/>
            <person name="Kim J.-H."/>
            <person name="Jung C.-H."/>
            <person name="Koh N.-H."/>
            <person name="Seo J.-S."/>
            <person name="Go S.-J."/>
        </authorList>
    </citation>
    <scope>NUCLEOTIDE SEQUENCE [LARGE SCALE GENOMIC DNA]</scope>
    <source>
        <strain>KACC10331 / KXO85</strain>
    </source>
</reference>
<evidence type="ECO:0000255" key="1">
    <source>
        <dbReference type="HAMAP-Rule" id="MF_01820"/>
    </source>
</evidence>
<evidence type="ECO:0000255" key="2">
    <source>
        <dbReference type="PROSITE-ProRule" id="PRU01058"/>
    </source>
</evidence>
<evidence type="ECO:0000256" key="3">
    <source>
        <dbReference type="SAM" id="MobiDB-lite"/>
    </source>
</evidence>
<protein>
    <recommendedName>
        <fullName evidence="1">Small ribosomal subunit biogenesis GTPase RsgA</fullName>
        <ecNumber evidence="1">3.6.1.-</ecNumber>
    </recommendedName>
</protein>
<keyword id="KW-0963">Cytoplasm</keyword>
<keyword id="KW-0342">GTP-binding</keyword>
<keyword id="KW-0378">Hydrolase</keyword>
<keyword id="KW-0479">Metal-binding</keyword>
<keyword id="KW-0547">Nucleotide-binding</keyword>
<keyword id="KW-1185">Reference proteome</keyword>
<keyword id="KW-0690">Ribosome biogenesis</keyword>
<keyword id="KW-0694">RNA-binding</keyword>
<keyword id="KW-0699">rRNA-binding</keyword>
<keyword id="KW-0862">Zinc</keyword>
<proteinExistence type="inferred from homology"/>